<accession>A1AZW2</accession>
<sequence length="292" mass="30852">MTGNLRTFILMAALTALVMGMGGLIGGRGGAVIALAIAGAGNLFAWWNSDKMVLRQQGAHLVTRQQAPELVDMVAALAQRANLPMPKVYVLETEQPNAFATGRNPENAAVAVTQGIMRVLNRDELAGVIAHELAHIKHRDTLTMTVTATMAGAIAMLGNMLMFSSMFGGRDDNRGSGLAAILAMIFAPMAAGLVQMAISRTREYEADRMGAEICGRPMALAGALAKISRAAGQVVNIPAERNPASASMFIVNPLHALRMDRLFATHPPTEERIARLQAMASGAPASGPWGAR</sequence>
<organism>
    <name type="scientific">Paracoccus denitrificans (strain Pd 1222)</name>
    <dbReference type="NCBI Taxonomy" id="318586"/>
    <lineage>
        <taxon>Bacteria</taxon>
        <taxon>Pseudomonadati</taxon>
        <taxon>Pseudomonadota</taxon>
        <taxon>Alphaproteobacteria</taxon>
        <taxon>Rhodobacterales</taxon>
        <taxon>Paracoccaceae</taxon>
        <taxon>Paracoccus</taxon>
    </lineage>
</organism>
<dbReference type="EC" id="3.4.24.-" evidence="1"/>
<dbReference type="EMBL" id="CP000489">
    <property type="protein sequence ID" value="ABL68806.1"/>
    <property type="molecule type" value="Genomic_DNA"/>
</dbReference>
<dbReference type="RefSeq" id="WP_011747039.1">
    <property type="nucleotide sequence ID" value="NC_008686.1"/>
</dbReference>
<dbReference type="SMR" id="A1AZW2"/>
<dbReference type="STRING" id="318586.Pden_0694"/>
<dbReference type="EnsemblBacteria" id="ABL68806">
    <property type="protein sequence ID" value="ABL68806"/>
    <property type="gene ID" value="Pden_0694"/>
</dbReference>
<dbReference type="GeneID" id="93451918"/>
<dbReference type="KEGG" id="pde:Pden_0694"/>
<dbReference type="eggNOG" id="COG0501">
    <property type="taxonomic scope" value="Bacteria"/>
</dbReference>
<dbReference type="HOGENOM" id="CLU_042266_3_0_5"/>
<dbReference type="OrthoDB" id="15218at2"/>
<dbReference type="Proteomes" id="UP000000361">
    <property type="component" value="Chromosome 1"/>
</dbReference>
<dbReference type="GO" id="GO:0005886">
    <property type="term" value="C:plasma membrane"/>
    <property type="evidence" value="ECO:0007669"/>
    <property type="project" value="UniProtKB-SubCell"/>
</dbReference>
<dbReference type="GO" id="GO:0004222">
    <property type="term" value="F:metalloendopeptidase activity"/>
    <property type="evidence" value="ECO:0007669"/>
    <property type="project" value="UniProtKB-UniRule"/>
</dbReference>
<dbReference type="GO" id="GO:0008270">
    <property type="term" value="F:zinc ion binding"/>
    <property type="evidence" value="ECO:0007669"/>
    <property type="project" value="UniProtKB-UniRule"/>
</dbReference>
<dbReference type="GO" id="GO:0006508">
    <property type="term" value="P:proteolysis"/>
    <property type="evidence" value="ECO:0007669"/>
    <property type="project" value="UniProtKB-KW"/>
</dbReference>
<dbReference type="CDD" id="cd07336">
    <property type="entry name" value="M48B_HtpX_like"/>
    <property type="match status" value="1"/>
</dbReference>
<dbReference type="Gene3D" id="3.30.2010.10">
    <property type="entry name" value="Metalloproteases ('zincins'), catalytic domain"/>
    <property type="match status" value="1"/>
</dbReference>
<dbReference type="HAMAP" id="MF_00188">
    <property type="entry name" value="Pept_M48_protease_HtpX"/>
    <property type="match status" value="1"/>
</dbReference>
<dbReference type="InterPro" id="IPR050083">
    <property type="entry name" value="HtpX_protease"/>
</dbReference>
<dbReference type="InterPro" id="IPR022919">
    <property type="entry name" value="Pept_M48_protease_HtpX"/>
</dbReference>
<dbReference type="InterPro" id="IPR001915">
    <property type="entry name" value="Peptidase_M48"/>
</dbReference>
<dbReference type="NCBIfam" id="NF002363">
    <property type="entry name" value="PRK01345.1"/>
    <property type="match status" value="1"/>
</dbReference>
<dbReference type="NCBIfam" id="NF002826">
    <property type="entry name" value="PRK03001.1"/>
    <property type="match status" value="1"/>
</dbReference>
<dbReference type="PANTHER" id="PTHR43221">
    <property type="entry name" value="PROTEASE HTPX"/>
    <property type="match status" value="1"/>
</dbReference>
<dbReference type="PANTHER" id="PTHR43221:SF1">
    <property type="entry name" value="PROTEASE HTPX"/>
    <property type="match status" value="1"/>
</dbReference>
<dbReference type="Pfam" id="PF01435">
    <property type="entry name" value="Peptidase_M48"/>
    <property type="match status" value="1"/>
</dbReference>
<name>HTPX_PARDP</name>
<reference key="1">
    <citation type="submission" date="2006-12" db="EMBL/GenBank/DDBJ databases">
        <title>Complete sequence of chromosome 1 of Paracoccus denitrificans PD1222.</title>
        <authorList>
            <person name="Copeland A."/>
            <person name="Lucas S."/>
            <person name="Lapidus A."/>
            <person name="Barry K."/>
            <person name="Detter J.C."/>
            <person name="Glavina del Rio T."/>
            <person name="Hammon N."/>
            <person name="Israni S."/>
            <person name="Dalin E."/>
            <person name="Tice H."/>
            <person name="Pitluck S."/>
            <person name="Munk A.C."/>
            <person name="Brettin T."/>
            <person name="Bruce D."/>
            <person name="Han C."/>
            <person name="Tapia R."/>
            <person name="Gilna P."/>
            <person name="Schmutz J."/>
            <person name="Larimer F."/>
            <person name="Land M."/>
            <person name="Hauser L."/>
            <person name="Kyrpides N."/>
            <person name="Lykidis A."/>
            <person name="Spiro S."/>
            <person name="Richardson D.J."/>
            <person name="Moir J.W.B."/>
            <person name="Ferguson S.J."/>
            <person name="van Spanning R.J.M."/>
            <person name="Richardson P."/>
        </authorList>
    </citation>
    <scope>NUCLEOTIDE SEQUENCE [LARGE SCALE GENOMIC DNA]</scope>
    <source>
        <strain>Pd 1222</strain>
    </source>
</reference>
<proteinExistence type="inferred from homology"/>
<protein>
    <recommendedName>
        <fullName evidence="1">Protease HtpX homolog</fullName>
        <ecNumber evidence="1">3.4.24.-</ecNumber>
    </recommendedName>
</protein>
<gene>
    <name evidence="1" type="primary">htpX</name>
    <name type="ordered locus">Pden_0694</name>
</gene>
<feature type="chain" id="PRO_1000077473" description="Protease HtpX homolog">
    <location>
        <begin position="1"/>
        <end position="292"/>
    </location>
</feature>
<feature type="transmembrane region" description="Helical" evidence="1">
    <location>
        <begin position="7"/>
        <end position="27"/>
    </location>
</feature>
<feature type="transmembrane region" description="Helical" evidence="1">
    <location>
        <begin position="29"/>
        <end position="49"/>
    </location>
</feature>
<feature type="transmembrane region" description="Helical" evidence="1">
    <location>
        <begin position="148"/>
        <end position="168"/>
    </location>
</feature>
<feature type="transmembrane region" description="Helical" evidence="1">
    <location>
        <begin position="178"/>
        <end position="198"/>
    </location>
</feature>
<feature type="active site" evidence="1">
    <location>
        <position position="132"/>
    </location>
</feature>
<feature type="binding site" evidence="1">
    <location>
        <position position="131"/>
    </location>
    <ligand>
        <name>Zn(2+)</name>
        <dbReference type="ChEBI" id="CHEBI:29105"/>
        <note>catalytic</note>
    </ligand>
</feature>
<feature type="binding site" evidence="1">
    <location>
        <position position="135"/>
    </location>
    <ligand>
        <name>Zn(2+)</name>
        <dbReference type="ChEBI" id="CHEBI:29105"/>
        <note>catalytic</note>
    </ligand>
</feature>
<feature type="binding site" evidence="1">
    <location>
        <position position="203"/>
    </location>
    <ligand>
        <name>Zn(2+)</name>
        <dbReference type="ChEBI" id="CHEBI:29105"/>
        <note>catalytic</note>
    </ligand>
</feature>
<comment type="cofactor">
    <cofactor evidence="1">
        <name>Zn(2+)</name>
        <dbReference type="ChEBI" id="CHEBI:29105"/>
    </cofactor>
    <text evidence="1">Binds 1 zinc ion per subunit.</text>
</comment>
<comment type="subcellular location">
    <subcellularLocation>
        <location evidence="1">Cell inner membrane</location>
        <topology evidence="1">Multi-pass membrane protein</topology>
    </subcellularLocation>
</comment>
<comment type="similarity">
    <text evidence="1">Belongs to the peptidase M48B family.</text>
</comment>
<evidence type="ECO:0000255" key="1">
    <source>
        <dbReference type="HAMAP-Rule" id="MF_00188"/>
    </source>
</evidence>
<keyword id="KW-0997">Cell inner membrane</keyword>
<keyword id="KW-1003">Cell membrane</keyword>
<keyword id="KW-0378">Hydrolase</keyword>
<keyword id="KW-0472">Membrane</keyword>
<keyword id="KW-0479">Metal-binding</keyword>
<keyword id="KW-0482">Metalloprotease</keyword>
<keyword id="KW-0645">Protease</keyword>
<keyword id="KW-1185">Reference proteome</keyword>
<keyword id="KW-0812">Transmembrane</keyword>
<keyword id="KW-1133">Transmembrane helix</keyword>
<keyword id="KW-0862">Zinc</keyword>